<evidence type="ECO:0000255" key="1">
    <source>
        <dbReference type="HAMAP-Rule" id="MF_00627"/>
    </source>
</evidence>
<dbReference type="EC" id="1.1.1.103" evidence="1"/>
<dbReference type="EMBL" id="FM954973">
    <property type="protein sequence ID" value="CAV25934.1"/>
    <property type="molecule type" value="Genomic_DNA"/>
</dbReference>
<dbReference type="SMR" id="B7VR52"/>
<dbReference type="STRING" id="575788.VS_II0437"/>
<dbReference type="KEGG" id="vsp:VS_II0437"/>
<dbReference type="PATRIC" id="fig|575788.5.peg.423"/>
<dbReference type="eggNOG" id="COG1063">
    <property type="taxonomic scope" value="Bacteria"/>
</dbReference>
<dbReference type="HOGENOM" id="CLU_026673_11_0_6"/>
<dbReference type="UniPathway" id="UPA00046">
    <property type="reaction ID" value="UER00505"/>
</dbReference>
<dbReference type="Proteomes" id="UP000009100">
    <property type="component" value="Chromosome 2"/>
</dbReference>
<dbReference type="GO" id="GO:0005737">
    <property type="term" value="C:cytoplasm"/>
    <property type="evidence" value="ECO:0007669"/>
    <property type="project" value="UniProtKB-SubCell"/>
</dbReference>
<dbReference type="GO" id="GO:0008743">
    <property type="term" value="F:L-threonine 3-dehydrogenase activity"/>
    <property type="evidence" value="ECO:0007669"/>
    <property type="project" value="UniProtKB-UniRule"/>
</dbReference>
<dbReference type="GO" id="GO:0008270">
    <property type="term" value="F:zinc ion binding"/>
    <property type="evidence" value="ECO:0007669"/>
    <property type="project" value="UniProtKB-UniRule"/>
</dbReference>
<dbReference type="GO" id="GO:0019518">
    <property type="term" value="P:L-threonine catabolic process to glycine"/>
    <property type="evidence" value="ECO:0007669"/>
    <property type="project" value="UniProtKB-UniPathway"/>
</dbReference>
<dbReference type="Gene3D" id="3.90.180.10">
    <property type="entry name" value="Medium-chain alcohol dehydrogenases, catalytic domain"/>
    <property type="match status" value="1"/>
</dbReference>
<dbReference type="Gene3D" id="3.40.50.720">
    <property type="entry name" value="NAD(P)-binding Rossmann-like Domain"/>
    <property type="match status" value="1"/>
</dbReference>
<dbReference type="HAMAP" id="MF_00627">
    <property type="entry name" value="Thr_dehydrog"/>
    <property type="match status" value="1"/>
</dbReference>
<dbReference type="InterPro" id="IPR013149">
    <property type="entry name" value="ADH-like_C"/>
</dbReference>
<dbReference type="InterPro" id="IPR013154">
    <property type="entry name" value="ADH-like_N"/>
</dbReference>
<dbReference type="InterPro" id="IPR002328">
    <property type="entry name" value="ADH_Zn_CS"/>
</dbReference>
<dbReference type="InterPro" id="IPR011032">
    <property type="entry name" value="GroES-like_sf"/>
</dbReference>
<dbReference type="InterPro" id="IPR004627">
    <property type="entry name" value="L-Threonine_3-DHase"/>
</dbReference>
<dbReference type="InterPro" id="IPR036291">
    <property type="entry name" value="NAD(P)-bd_dom_sf"/>
</dbReference>
<dbReference type="InterPro" id="IPR020843">
    <property type="entry name" value="PKS_ER"/>
</dbReference>
<dbReference type="InterPro" id="IPR050129">
    <property type="entry name" value="Zn_alcohol_dh"/>
</dbReference>
<dbReference type="NCBIfam" id="NF003808">
    <property type="entry name" value="PRK05396.1"/>
    <property type="match status" value="1"/>
</dbReference>
<dbReference type="NCBIfam" id="TIGR00692">
    <property type="entry name" value="tdh"/>
    <property type="match status" value="1"/>
</dbReference>
<dbReference type="PANTHER" id="PTHR43401">
    <property type="entry name" value="L-THREONINE 3-DEHYDROGENASE"/>
    <property type="match status" value="1"/>
</dbReference>
<dbReference type="PANTHER" id="PTHR43401:SF2">
    <property type="entry name" value="L-THREONINE 3-DEHYDROGENASE"/>
    <property type="match status" value="1"/>
</dbReference>
<dbReference type="Pfam" id="PF08240">
    <property type="entry name" value="ADH_N"/>
    <property type="match status" value="1"/>
</dbReference>
<dbReference type="Pfam" id="PF00107">
    <property type="entry name" value="ADH_zinc_N"/>
    <property type="match status" value="1"/>
</dbReference>
<dbReference type="SMART" id="SM00829">
    <property type="entry name" value="PKS_ER"/>
    <property type="match status" value="1"/>
</dbReference>
<dbReference type="SUPFAM" id="SSF50129">
    <property type="entry name" value="GroES-like"/>
    <property type="match status" value="1"/>
</dbReference>
<dbReference type="SUPFAM" id="SSF51735">
    <property type="entry name" value="NAD(P)-binding Rossmann-fold domains"/>
    <property type="match status" value="1"/>
</dbReference>
<dbReference type="PROSITE" id="PS00059">
    <property type="entry name" value="ADH_ZINC"/>
    <property type="match status" value="1"/>
</dbReference>
<comment type="function">
    <text evidence="1">Catalyzes the NAD(+)-dependent oxidation of L-threonine to 2-amino-3-ketobutyrate.</text>
</comment>
<comment type="catalytic activity">
    <reaction evidence="1">
        <text>L-threonine + NAD(+) = (2S)-2-amino-3-oxobutanoate + NADH + H(+)</text>
        <dbReference type="Rhea" id="RHEA:13161"/>
        <dbReference type="ChEBI" id="CHEBI:15378"/>
        <dbReference type="ChEBI" id="CHEBI:57540"/>
        <dbReference type="ChEBI" id="CHEBI:57926"/>
        <dbReference type="ChEBI" id="CHEBI:57945"/>
        <dbReference type="ChEBI" id="CHEBI:78948"/>
        <dbReference type="EC" id="1.1.1.103"/>
    </reaction>
</comment>
<comment type="cofactor">
    <cofactor evidence="1">
        <name>Zn(2+)</name>
        <dbReference type="ChEBI" id="CHEBI:29105"/>
    </cofactor>
    <text evidence="1">Binds 2 Zn(2+) ions per subunit.</text>
</comment>
<comment type="pathway">
    <text evidence="1">Amino-acid degradation; L-threonine degradation via oxydo-reductase pathway; glycine from L-threonine: step 1/2.</text>
</comment>
<comment type="subunit">
    <text evidence="1">Homotetramer.</text>
</comment>
<comment type="subcellular location">
    <subcellularLocation>
        <location evidence="1">Cytoplasm</location>
    </subcellularLocation>
</comment>
<comment type="similarity">
    <text evidence="1">Belongs to the zinc-containing alcohol dehydrogenase family.</text>
</comment>
<reference key="1">
    <citation type="submission" date="2009-02" db="EMBL/GenBank/DDBJ databases">
        <title>Vibrio splendidus str. LGP32 complete genome.</title>
        <authorList>
            <person name="Mazel D."/>
            <person name="Le Roux F."/>
        </authorList>
    </citation>
    <scope>NUCLEOTIDE SEQUENCE [LARGE SCALE GENOMIC DNA]</scope>
    <source>
        <strain>LGP32</strain>
    </source>
</reference>
<proteinExistence type="inferred from homology"/>
<keyword id="KW-0963">Cytoplasm</keyword>
<keyword id="KW-0479">Metal-binding</keyword>
<keyword id="KW-0520">NAD</keyword>
<keyword id="KW-0560">Oxidoreductase</keyword>
<keyword id="KW-0862">Zinc</keyword>
<protein>
    <recommendedName>
        <fullName evidence="1">L-threonine 3-dehydrogenase</fullName>
        <shortName evidence="1">TDH</shortName>
        <ecNumber evidence="1">1.1.1.103</ecNumber>
    </recommendedName>
</protein>
<accession>B7VR52</accession>
<name>TDH_VIBA3</name>
<gene>
    <name evidence="1" type="primary">tdh</name>
    <name type="ordered locus">VS_II0437</name>
</gene>
<sequence>MKIKALSKLKPEEGIWMTEVEKPEMGHNDLLIRIKKTAICGTDVHIYNWDEWSQNTIPVPMVVGHEYVGEVVGIGQEVRGFEIGDRVSGEGHITCGHCRNCRGGRTHLCRNTTGVGVNRTGAFSEFLVIPAFNAFKIPAEISDDLASIFDPFGNAVHTALSFDLVGEDVLITGAGPIGIMAAAVAKHVGARHVVITDVNEYRLDLARQMGVTRAVNVMEEKLEDVMSDLGMTEGFDVGLEMSGNPSAFNSMLTNMNHGGKISLLGIPPSDMAVDWNQVIFKGLVIKGIYGREMFETWYKMASLIQSGLDLTPIITHHYKVDDFQKGFDMMRSGMSGKVILDWE</sequence>
<feature type="chain" id="PRO_1000147266" description="L-threonine 3-dehydrogenase">
    <location>
        <begin position="1"/>
        <end position="343"/>
    </location>
</feature>
<feature type="active site" description="Charge relay system" evidence="1">
    <location>
        <position position="42"/>
    </location>
</feature>
<feature type="active site" description="Charge relay system" evidence="1">
    <location>
        <position position="45"/>
    </location>
</feature>
<feature type="binding site" evidence="1">
    <location>
        <position position="40"/>
    </location>
    <ligand>
        <name>Zn(2+)</name>
        <dbReference type="ChEBI" id="CHEBI:29105"/>
        <label>1</label>
        <note>catalytic</note>
    </ligand>
</feature>
<feature type="binding site" evidence="1">
    <location>
        <position position="65"/>
    </location>
    <ligand>
        <name>Zn(2+)</name>
        <dbReference type="ChEBI" id="CHEBI:29105"/>
        <label>1</label>
        <note>catalytic</note>
    </ligand>
</feature>
<feature type="binding site" evidence="1">
    <location>
        <position position="66"/>
    </location>
    <ligand>
        <name>Zn(2+)</name>
        <dbReference type="ChEBI" id="CHEBI:29105"/>
        <label>1</label>
        <note>catalytic</note>
    </ligand>
</feature>
<feature type="binding site" evidence="1">
    <location>
        <position position="95"/>
    </location>
    <ligand>
        <name>Zn(2+)</name>
        <dbReference type="ChEBI" id="CHEBI:29105"/>
        <label>2</label>
    </ligand>
</feature>
<feature type="binding site" evidence="1">
    <location>
        <position position="98"/>
    </location>
    <ligand>
        <name>Zn(2+)</name>
        <dbReference type="ChEBI" id="CHEBI:29105"/>
        <label>2</label>
    </ligand>
</feature>
<feature type="binding site" evidence="1">
    <location>
        <position position="101"/>
    </location>
    <ligand>
        <name>Zn(2+)</name>
        <dbReference type="ChEBI" id="CHEBI:29105"/>
        <label>2</label>
    </ligand>
</feature>
<feature type="binding site" evidence="1">
    <location>
        <position position="109"/>
    </location>
    <ligand>
        <name>Zn(2+)</name>
        <dbReference type="ChEBI" id="CHEBI:29105"/>
        <label>2</label>
    </ligand>
</feature>
<feature type="binding site" evidence="1">
    <location>
        <position position="177"/>
    </location>
    <ligand>
        <name>NAD(+)</name>
        <dbReference type="ChEBI" id="CHEBI:57540"/>
    </ligand>
</feature>
<feature type="binding site" evidence="1">
    <location>
        <position position="197"/>
    </location>
    <ligand>
        <name>NAD(+)</name>
        <dbReference type="ChEBI" id="CHEBI:57540"/>
    </ligand>
</feature>
<feature type="binding site" evidence="1">
    <location>
        <position position="202"/>
    </location>
    <ligand>
        <name>NAD(+)</name>
        <dbReference type="ChEBI" id="CHEBI:57540"/>
    </ligand>
</feature>
<feature type="binding site" evidence="1">
    <location>
        <begin position="264"/>
        <end position="266"/>
    </location>
    <ligand>
        <name>NAD(+)</name>
        <dbReference type="ChEBI" id="CHEBI:57540"/>
    </ligand>
</feature>
<feature type="binding site" evidence="1">
    <location>
        <begin position="288"/>
        <end position="289"/>
    </location>
    <ligand>
        <name>NAD(+)</name>
        <dbReference type="ChEBI" id="CHEBI:57540"/>
    </ligand>
</feature>
<feature type="site" description="Important for catalytic activity for the proton relay mechanism but does not participate directly in the coordination of zinc atom" evidence="1">
    <location>
        <position position="150"/>
    </location>
</feature>
<organism>
    <name type="scientific">Vibrio atlanticus (strain LGP32)</name>
    <name type="common">Vibrio splendidus (strain Mel32)</name>
    <dbReference type="NCBI Taxonomy" id="575788"/>
    <lineage>
        <taxon>Bacteria</taxon>
        <taxon>Pseudomonadati</taxon>
        <taxon>Pseudomonadota</taxon>
        <taxon>Gammaproteobacteria</taxon>
        <taxon>Vibrionales</taxon>
        <taxon>Vibrionaceae</taxon>
        <taxon>Vibrio</taxon>
    </lineage>
</organism>